<sequence length="609" mass="68618">MNMMTSSILMILILLTTPIIISMTNLPKLIDFPSYATSSIKFSFLLSLLPLLLFFHHNTEYMITNWHWLTINSIKLTMSFKIDYFSILFLSVALFVTWSIMQFSSWYMHSDPHINRFIKYLMMFLITMLILTSANNLFQLFIGWEGVGIMSFLLIGWWYGRADANTAALQAILYNRVGDIGFILAMTWFCLNMNSWELQQIFLTNTNNLVPLTGLLIAATGKSAQFGLHPWLPSAMEGPTPVSALLHSSTMVVAGIFLMIRFHPLTSNNSTIMTAMLCLGAITTLFTAICALTQNDIKKIVAFSTSSQLGLMMVTLGINQPYLAFLHICTHAFFKAMLFMCSGSIIHSLNDEQDIRKMGNMMKAMPFTSSCLIIGSLALTGMPFLTGFYSKDLIIEAINTCNTNAWALMITLIATSMTAVYSMRIIYFVTMTKPRYSPLITINENNPNLINPIKRLALGSILAGFLISLNIPPTNIQILTMPWHLKMTALLITILGFAIALELNNLTLNLSMSKPTKLSSFSTSLGYYPPIMHRIIPQKTLNSSYKLSLNLLDLIWLEKTIPKSTSITQTQLSKMMSNQKGLIKLYFLSFLITISLIFILHTLNPEWFQ</sequence>
<accession>P11661</accession>
<reference key="1">
    <citation type="journal article" date="1989" name="J. Mol. Evol.">
        <title>The complete nucleotide sequence of the Rattus norvegicus mitochondrial genome: cryptic signals revealed by comparative analysis between vertebrates.</title>
        <authorList>
            <person name="Gadaleta G."/>
            <person name="Pepe G."/>
            <person name="de Candia G."/>
            <person name="Quagliariello C."/>
            <person name="Sbisa E."/>
            <person name="Saccone C."/>
        </authorList>
    </citation>
    <scope>NUCLEOTIDE SEQUENCE [GENOMIC DNA]</scope>
    <source>
        <strain>Wistar</strain>
    </source>
</reference>
<reference key="2">
    <citation type="submission" date="1995-01" db="EMBL/GenBank/DDBJ databases">
        <authorList>
            <person name="Saccone C."/>
        </authorList>
    </citation>
    <scope>NUCLEOTIDE SEQUENCE [GENOMIC DNA]</scope>
    <scope>SEQUENCE REVISION</scope>
</reference>
<reference key="3">
    <citation type="journal article" date="2004" name="Nature">
        <title>Genome sequence of the Brown Norway rat yields insights into mammalian evolution.</title>
        <authorList>
            <person name="Gibbs R.A."/>
            <person name="Weinstock G.M."/>
            <person name="Metzker M.L."/>
            <person name="Muzny D.M."/>
            <person name="Sodergren E.J."/>
            <person name="Scherer S."/>
            <person name="Scott G."/>
            <person name="Steffen D."/>
            <person name="Worley K.C."/>
            <person name="Burch P.E."/>
            <person name="Okwuonu G."/>
            <person name="Hines S."/>
            <person name="Lewis L."/>
            <person name="Deramo C."/>
            <person name="Delgado O."/>
            <person name="Dugan-Rocha S."/>
            <person name="Miner G."/>
            <person name="Morgan M."/>
            <person name="Hawes A."/>
            <person name="Gill R."/>
            <person name="Holt R.A."/>
            <person name="Adams M.D."/>
            <person name="Amanatides P.G."/>
            <person name="Baden-Tillson H."/>
            <person name="Barnstead M."/>
            <person name="Chin S."/>
            <person name="Evans C.A."/>
            <person name="Ferriera S."/>
            <person name="Fosler C."/>
            <person name="Glodek A."/>
            <person name="Gu Z."/>
            <person name="Jennings D."/>
            <person name="Kraft C.L."/>
            <person name="Nguyen T."/>
            <person name="Pfannkoch C.M."/>
            <person name="Sitter C."/>
            <person name="Sutton G.G."/>
            <person name="Venter J.C."/>
            <person name="Woodage T."/>
            <person name="Smith D."/>
            <person name="Lee H.-M."/>
            <person name="Gustafson E."/>
            <person name="Cahill P."/>
            <person name="Kana A."/>
            <person name="Doucette-Stamm L."/>
            <person name="Weinstock K."/>
            <person name="Fechtel K."/>
            <person name="Weiss R.B."/>
            <person name="Dunn D.M."/>
            <person name="Green E.D."/>
            <person name="Blakesley R.W."/>
            <person name="Bouffard G.G."/>
            <person name="De Jong P.J."/>
            <person name="Osoegawa K."/>
            <person name="Zhu B."/>
            <person name="Marra M."/>
            <person name="Schein J."/>
            <person name="Bosdet I."/>
            <person name="Fjell C."/>
            <person name="Jones S."/>
            <person name="Krzywinski M."/>
            <person name="Mathewson C."/>
            <person name="Siddiqui A."/>
            <person name="Wye N."/>
            <person name="McPherson J."/>
            <person name="Zhao S."/>
            <person name="Fraser C.M."/>
            <person name="Shetty J."/>
            <person name="Shatsman S."/>
            <person name="Geer K."/>
            <person name="Chen Y."/>
            <person name="Abramzon S."/>
            <person name="Nierman W.C."/>
            <person name="Havlak P.H."/>
            <person name="Chen R."/>
            <person name="Durbin K.J."/>
            <person name="Egan A."/>
            <person name="Ren Y."/>
            <person name="Song X.-Z."/>
            <person name="Li B."/>
            <person name="Liu Y."/>
            <person name="Qin X."/>
            <person name="Cawley S."/>
            <person name="Cooney A.J."/>
            <person name="D'Souza L.M."/>
            <person name="Martin K."/>
            <person name="Wu J.Q."/>
            <person name="Gonzalez-Garay M.L."/>
            <person name="Jackson A.R."/>
            <person name="Kalafus K.J."/>
            <person name="McLeod M.P."/>
            <person name="Milosavljevic A."/>
            <person name="Virk D."/>
            <person name="Volkov A."/>
            <person name="Wheeler D.A."/>
            <person name="Zhang Z."/>
            <person name="Bailey J.A."/>
            <person name="Eichler E.E."/>
            <person name="Tuzun E."/>
            <person name="Birney E."/>
            <person name="Mongin E."/>
            <person name="Ureta-Vidal A."/>
            <person name="Woodwark C."/>
            <person name="Zdobnov E."/>
            <person name="Bork P."/>
            <person name="Suyama M."/>
            <person name="Torrents D."/>
            <person name="Alexandersson M."/>
            <person name="Trask B.J."/>
            <person name="Young J.M."/>
            <person name="Huang H."/>
            <person name="Wang H."/>
            <person name="Xing H."/>
            <person name="Daniels S."/>
            <person name="Gietzen D."/>
            <person name="Schmidt J."/>
            <person name="Stevens K."/>
            <person name="Vitt U."/>
            <person name="Wingrove J."/>
            <person name="Camara F."/>
            <person name="Mar Alba M."/>
            <person name="Abril J.F."/>
            <person name="Guigo R."/>
            <person name="Smit A."/>
            <person name="Dubchak I."/>
            <person name="Rubin E.M."/>
            <person name="Couronne O."/>
            <person name="Poliakov A."/>
            <person name="Huebner N."/>
            <person name="Ganten D."/>
            <person name="Goesele C."/>
            <person name="Hummel O."/>
            <person name="Kreitler T."/>
            <person name="Lee Y.-A."/>
            <person name="Monti J."/>
            <person name="Schulz H."/>
            <person name="Zimdahl H."/>
            <person name="Himmelbauer H."/>
            <person name="Lehrach H."/>
            <person name="Jacob H.J."/>
            <person name="Bromberg S."/>
            <person name="Gullings-Handley J."/>
            <person name="Jensen-Seaman M.I."/>
            <person name="Kwitek A.E."/>
            <person name="Lazar J."/>
            <person name="Pasko D."/>
            <person name="Tonellato P.J."/>
            <person name="Twigger S."/>
            <person name="Ponting C.P."/>
            <person name="Duarte J.M."/>
            <person name="Rice S."/>
            <person name="Goodstadt L."/>
            <person name="Beatson S.A."/>
            <person name="Emes R.D."/>
            <person name="Winter E.E."/>
            <person name="Webber C."/>
            <person name="Brandt P."/>
            <person name="Nyakatura G."/>
            <person name="Adetobi M."/>
            <person name="Chiaromonte F."/>
            <person name="Elnitski L."/>
            <person name="Eswara P."/>
            <person name="Hardison R.C."/>
            <person name="Hou M."/>
            <person name="Kolbe D."/>
            <person name="Makova K."/>
            <person name="Miller W."/>
            <person name="Nekrutenko A."/>
            <person name="Riemer C."/>
            <person name="Schwartz S."/>
            <person name="Taylor J."/>
            <person name="Yang S."/>
            <person name="Zhang Y."/>
            <person name="Lindpaintner K."/>
            <person name="Andrews T.D."/>
            <person name="Caccamo M."/>
            <person name="Clamp M."/>
            <person name="Clarke L."/>
            <person name="Curwen V."/>
            <person name="Durbin R.M."/>
            <person name="Eyras E."/>
            <person name="Searle S.M."/>
            <person name="Cooper G.M."/>
            <person name="Batzoglou S."/>
            <person name="Brudno M."/>
            <person name="Sidow A."/>
            <person name="Stone E.A."/>
            <person name="Payseur B.A."/>
            <person name="Bourque G."/>
            <person name="Lopez-Otin C."/>
            <person name="Puente X.S."/>
            <person name="Chakrabarti K."/>
            <person name="Chatterji S."/>
            <person name="Dewey C."/>
            <person name="Pachter L."/>
            <person name="Bray N."/>
            <person name="Yap V.B."/>
            <person name="Caspi A."/>
            <person name="Tesler G."/>
            <person name="Pevzner P.A."/>
            <person name="Haussler D."/>
            <person name="Roskin K.M."/>
            <person name="Baertsch R."/>
            <person name="Clawson H."/>
            <person name="Furey T.S."/>
            <person name="Hinrichs A.S."/>
            <person name="Karolchik D."/>
            <person name="Kent W.J."/>
            <person name="Rosenbloom K.R."/>
            <person name="Trumbower H."/>
            <person name="Weirauch M."/>
            <person name="Cooper D.N."/>
            <person name="Stenson P.D."/>
            <person name="Ma B."/>
            <person name="Brent M."/>
            <person name="Arumugam M."/>
            <person name="Shteynberg D."/>
            <person name="Copley R.R."/>
            <person name="Taylor M.S."/>
            <person name="Riethman H."/>
            <person name="Mudunuri U."/>
            <person name="Peterson J."/>
            <person name="Guyer M."/>
            <person name="Felsenfeld A."/>
            <person name="Old S."/>
            <person name="Mockrin S."/>
            <person name="Collins F.S."/>
        </authorList>
    </citation>
    <scope>NUCLEOTIDE SEQUENCE [LARGE SCALE GENOMIC DNA]</scope>
    <source>
        <strain>Brown Norway</strain>
    </source>
</reference>
<geneLocation type="mitochondrion"/>
<comment type="function">
    <text evidence="1">Core subunit of the mitochondrial membrane respiratory chain NADH dehydrogenase (Complex I) which catalyzes electron transfer from NADH through the respiratory chain, using ubiquinone as an electron acceptor. Essential for the catalytic activity and assembly of complex I.</text>
</comment>
<comment type="catalytic activity">
    <reaction evidence="1">
        <text>a ubiquinone + NADH + 5 H(+)(in) = a ubiquinol + NAD(+) + 4 H(+)(out)</text>
        <dbReference type="Rhea" id="RHEA:29091"/>
        <dbReference type="Rhea" id="RHEA-COMP:9565"/>
        <dbReference type="Rhea" id="RHEA-COMP:9566"/>
        <dbReference type="ChEBI" id="CHEBI:15378"/>
        <dbReference type="ChEBI" id="CHEBI:16389"/>
        <dbReference type="ChEBI" id="CHEBI:17976"/>
        <dbReference type="ChEBI" id="CHEBI:57540"/>
        <dbReference type="ChEBI" id="CHEBI:57945"/>
        <dbReference type="EC" id="7.1.1.2"/>
    </reaction>
</comment>
<comment type="subunit">
    <text evidence="2">Core subunit of respiratory chain NADH dehydrogenase (Complex I) which is composed of 45 different subunits.</text>
</comment>
<comment type="subcellular location">
    <subcellularLocation>
        <location evidence="2">Mitochondrion inner membrane</location>
        <topology evidence="3">Multi-pass membrane protein</topology>
    </subcellularLocation>
</comment>
<comment type="similarity">
    <text evidence="4">Belongs to the complex I subunit 5 family.</text>
</comment>
<gene>
    <name evidence="5" type="primary">Mt-nd5</name>
    <name type="synonym">Mtnd5</name>
    <name type="synonym">Nd5</name>
</gene>
<protein>
    <recommendedName>
        <fullName>NADH-ubiquinone oxidoreductase chain 5</fullName>
        <ecNumber evidence="1">7.1.1.2</ecNumber>
    </recommendedName>
    <alternativeName>
        <fullName>NADH dehydrogenase subunit 5</fullName>
    </alternativeName>
</protein>
<organism>
    <name type="scientific">Rattus norvegicus</name>
    <name type="common">Rat</name>
    <dbReference type="NCBI Taxonomy" id="10116"/>
    <lineage>
        <taxon>Eukaryota</taxon>
        <taxon>Metazoa</taxon>
        <taxon>Chordata</taxon>
        <taxon>Craniata</taxon>
        <taxon>Vertebrata</taxon>
        <taxon>Euteleostomi</taxon>
        <taxon>Mammalia</taxon>
        <taxon>Eutheria</taxon>
        <taxon>Euarchontoglires</taxon>
        <taxon>Glires</taxon>
        <taxon>Rodentia</taxon>
        <taxon>Myomorpha</taxon>
        <taxon>Muroidea</taxon>
        <taxon>Muridae</taxon>
        <taxon>Murinae</taxon>
        <taxon>Rattus</taxon>
    </lineage>
</organism>
<dbReference type="EC" id="7.1.1.2" evidence="1"/>
<dbReference type="EMBL" id="X14848">
    <property type="protein sequence ID" value="CAA32964.1"/>
    <property type="molecule type" value="Genomic_DNA"/>
</dbReference>
<dbReference type="EMBL" id="AY172581">
    <property type="protein sequence ID" value="AAN77604.1"/>
    <property type="molecule type" value="Genomic_DNA"/>
</dbReference>
<dbReference type="PIR" id="S04757">
    <property type="entry name" value="S04757"/>
</dbReference>
<dbReference type="RefSeq" id="AP_004902.1">
    <property type="nucleotide sequence ID" value="AC_000022.2"/>
</dbReference>
<dbReference type="RefSeq" id="YP_665639.1">
    <property type="nucleotide sequence ID" value="NC_001665.2"/>
</dbReference>
<dbReference type="SMR" id="P11661"/>
<dbReference type="FunCoup" id="P11661">
    <property type="interactions" value="80"/>
</dbReference>
<dbReference type="STRING" id="10116.ENSRNOP00000044573"/>
<dbReference type="GlyGen" id="P11661">
    <property type="glycosylation" value="1 site"/>
</dbReference>
<dbReference type="PhosphoSitePlus" id="P11661"/>
<dbReference type="SwissPalm" id="P11661"/>
<dbReference type="PaxDb" id="10116-ENSRNOP00000044573"/>
<dbReference type="Ensembl" id="ENSRNOT00000048767.3">
    <property type="protein sequence ID" value="ENSRNOP00000044573.3"/>
    <property type="gene ID" value="ENSRNOG00000029971.3"/>
</dbReference>
<dbReference type="GeneID" id="26202"/>
<dbReference type="KEGG" id="rno:26202"/>
<dbReference type="AGR" id="RGD:620560"/>
<dbReference type="CTD" id="4540"/>
<dbReference type="RGD" id="620560">
    <property type="gene designation" value="Mt-nd5"/>
</dbReference>
<dbReference type="eggNOG" id="KOG4668">
    <property type="taxonomic scope" value="Eukaryota"/>
</dbReference>
<dbReference type="GeneTree" id="ENSGT00730000111303"/>
<dbReference type="HOGENOM" id="CLU_007100_6_0_1"/>
<dbReference type="InParanoid" id="P11661"/>
<dbReference type="OMA" id="GVGIMSF"/>
<dbReference type="OrthoDB" id="8876749at2759"/>
<dbReference type="Reactome" id="R-RNO-611105">
    <property type="pathway name" value="Respiratory electron transport"/>
</dbReference>
<dbReference type="Reactome" id="R-RNO-6799198">
    <property type="pathway name" value="Complex I biogenesis"/>
</dbReference>
<dbReference type="PRO" id="PR:P11661"/>
<dbReference type="Proteomes" id="UP000002494">
    <property type="component" value="Mitochondrion"/>
</dbReference>
<dbReference type="Bgee" id="ENSRNOG00000029971">
    <property type="expression patterns" value="Expressed in cerebellum and 20 other cell types or tissues"/>
</dbReference>
<dbReference type="ExpressionAtlas" id="P11661">
    <property type="expression patterns" value="baseline and differential"/>
</dbReference>
<dbReference type="GO" id="GO:0005743">
    <property type="term" value="C:mitochondrial inner membrane"/>
    <property type="evidence" value="ECO:0000250"/>
    <property type="project" value="UniProtKB"/>
</dbReference>
<dbReference type="GO" id="GO:0045271">
    <property type="term" value="C:respiratory chain complex I"/>
    <property type="evidence" value="ECO:0000266"/>
    <property type="project" value="RGD"/>
</dbReference>
<dbReference type="GO" id="GO:0008137">
    <property type="term" value="F:NADH dehydrogenase (ubiquinone) activity"/>
    <property type="evidence" value="ECO:0000250"/>
    <property type="project" value="UniProtKB"/>
</dbReference>
<dbReference type="GO" id="GO:0015990">
    <property type="term" value="P:electron transport coupled proton transport"/>
    <property type="evidence" value="ECO:0000318"/>
    <property type="project" value="GO_Central"/>
</dbReference>
<dbReference type="GO" id="GO:0006120">
    <property type="term" value="P:mitochondrial electron transport, NADH to ubiquinone"/>
    <property type="evidence" value="ECO:0000250"/>
    <property type="project" value="UniProtKB"/>
</dbReference>
<dbReference type="GO" id="GO:0032981">
    <property type="term" value="P:mitochondrial respiratory chain complex I assembly"/>
    <property type="evidence" value="ECO:0000250"/>
    <property type="project" value="UniProtKB"/>
</dbReference>
<dbReference type="GO" id="GO:0042542">
    <property type="term" value="P:response to hydrogen peroxide"/>
    <property type="evidence" value="ECO:0000270"/>
    <property type="project" value="RGD"/>
</dbReference>
<dbReference type="GO" id="GO:0001666">
    <property type="term" value="P:response to hypoxia"/>
    <property type="evidence" value="ECO:0000270"/>
    <property type="project" value="RGD"/>
</dbReference>
<dbReference type="InterPro" id="IPR010934">
    <property type="entry name" value="NADH_DH_su5_C"/>
</dbReference>
<dbReference type="InterPro" id="IPR018393">
    <property type="entry name" value="NADHpl_OxRdtase_5_subgr"/>
</dbReference>
<dbReference type="InterPro" id="IPR001750">
    <property type="entry name" value="ND/Mrp_TM"/>
</dbReference>
<dbReference type="InterPro" id="IPR003945">
    <property type="entry name" value="NU5C-like"/>
</dbReference>
<dbReference type="InterPro" id="IPR001516">
    <property type="entry name" value="Proton_antipo_N"/>
</dbReference>
<dbReference type="NCBIfam" id="TIGR01974">
    <property type="entry name" value="NDH_I_L"/>
    <property type="match status" value="1"/>
</dbReference>
<dbReference type="PANTHER" id="PTHR42829">
    <property type="entry name" value="NADH-UBIQUINONE OXIDOREDUCTASE CHAIN 5"/>
    <property type="match status" value="1"/>
</dbReference>
<dbReference type="PANTHER" id="PTHR42829:SF2">
    <property type="entry name" value="NADH-UBIQUINONE OXIDOREDUCTASE CHAIN 5"/>
    <property type="match status" value="1"/>
</dbReference>
<dbReference type="Pfam" id="PF06455">
    <property type="entry name" value="NADH5_C"/>
    <property type="match status" value="1"/>
</dbReference>
<dbReference type="Pfam" id="PF00361">
    <property type="entry name" value="Proton_antipo_M"/>
    <property type="match status" value="1"/>
</dbReference>
<dbReference type="Pfam" id="PF00662">
    <property type="entry name" value="Proton_antipo_N"/>
    <property type="match status" value="1"/>
</dbReference>
<dbReference type="PRINTS" id="PR01434">
    <property type="entry name" value="NADHDHGNASE5"/>
</dbReference>
<evidence type="ECO:0000250" key="1">
    <source>
        <dbReference type="UniProtKB" id="P03915"/>
    </source>
</evidence>
<evidence type="ECO:0000250" key="2">
    <source>
        <dbReference type="UniProtKB" id="P03920"/>
    </source>
</evidence>
<evidence type="ECO:0000255" key="3"/>
<evidence type="ECO:0000305" key="4"/>
<evidence type="ECO:0000312" key="5">
    <source>
        <dbReference type="RGD" id="620560"/>
    </source>
</evidence>
<name>NU5M_RAT</name>
<feature type="chain" id="PRO_0000118141" description="NADH-ubiquinone oxidoreductase chain 5">
    <location>
        <begin position="1"/>
        <end position="609"/>
    </location>
</feature>
<feature type="transmembrane region" description="Helical" evidence="3">
    <location>
        <begin position="6"/>
        <end position="26"/>
    </location>
</feature>
<feature type="transmembrane region" description="Helical" evidence="3">
    <location>
        <begin position="35"/>
        <end position="55"/>
    </location>
</feature>
<feature type="transmembrane region" description="Helical" evidence="3">
    <location>
        <begin position="84"/>
        <end position="104"/>
    </location>
</feature>
<feature type="transmembrane region" description="Helical" evidence="3">
    <location>
        <begin position="116"/>
        <end position="138"/>
    </location>
</feature>
<feature type="transmembrane region" description="Helical" evidence="3">
    <location>
        <begin position="140"/>
        <end position="160"/>
    </location>
</feature>
<feature type="transmembrane region" description="Helical" evidence="3">
    <location>
        <begin position="171"/>
        <end position="191"/>
    </location>
</feature>
<feature type="transmembrane region" description="Helical" evidence="3">
    <location>
        <begin position="240"/>
        <end position="260"/>
    </location>
</feature>
<feature type="transmembrane region" description="Helical" evidence="3">
    <location>
        <begin position="272"/>
        <end position="292"/>
    </location>
</feature>
<feature type="transmembrane region" description="Helical" evidence="3">
    <location>
        <begin position="300"/>
        <end position="319"/>
    </location>
</feature>
<feature type="transmembrane region" description="Helical" evidence="3">
    <location>
        <begin position="330"/>
        <end position="350"/>
    </location>
</feature>
<feature type="transmembrane region" description="Helical" evidence="3">
    <location>
        <begin position="365"/>
        <end position="385"/>
    </location>
</feature>
<feature type="transmembrane region" description="Helical" evidence="3">
    <location>
        <begin position="409"/>
        <end position="429"/>
    </location>
</feature>
<feature type="transmembrane region" description="Helical" evidence="3">
    <location>
        <begin position="456"/>
        <end position="476"/>
    </location>
</feature>
<feature type="transmembrane region" description="Helical" evidence="3">
    <location>
        <begin position="481"/>
        <end position="501"/>
    </location>
</feature>
<feature type="transmembrane region" description="Helical" evidence="3">
    <location>
        <begin position="581"/>
        <end position="601"/>
    </location>
</feature>
<feature type="sequence conflict" description="In Ref. 1; CAA32964." evidence="4" ref="1">
    <original>SS</original>
    <variation>IL</variation>
    <location>
        <begin position="6"/>
        <end position="7"/>
    </location>
</feature>
<feature type="sequence conflict" description="In Ref. 1; CAA32964." evidence="4" ref="1">
    <original>I</original>
    <variation>D</variation>
    <location>
        <position position="13"/>
    </location>
</feature>
<feature type="sequence conflict" description="In Ref. 1; CAA32964." evidence="4" ref="1">
    <original>IISMTNLPKLIDFPSYATS</original>
    <variation>TFSMTILTKLMYFRHMLIT</variation>
    <location>
        <begin position="20"/>
        <end position="38"/>
    </location>
</feature>
<feature type="sequence conflict" description="In Ref. 1; CAA32964." evidence="4" ref="1">
    <original>A</original>
    <variation>S</variation>
    <location>
        <position position="93"/>
    </location>
</feature>
<feature type="sequence conflict" description="In Ref. 1; CAA32964." evidence="4" ref="1">
    <original>IT</original>
    <variation>NN</variation>
    <location>
        <begin position="126"/>
        <end position="127"/>
    </location>
</feature>
<feature type="sequence conflict" description="In Ref. 1; CAA32964." evidence="4" ref="1">
    <original>R</original>
    <variation>L</variation>
    <location>
        <position position="161"/>
    </location>
</feature>
<feature type="sequence conflict" description="In Ref. 1; CAA32964." evidence="4" ref="1">
    <original>T</original>
    <variation>TN</variation>
    <location>
        <position position="206"/>
    </location>
</feature>
<feature type="sequence conflict" description="In Ref. 1; CAA32964." evidence="4" ref="1">
    <original>S</original>
    <variation>I</variation>
    <location>
        <position position="348"/>
    </location>
</feature>
<feature type="sequence conflict" description="In Ref. 1; CAA32964." evidence="4" ref="1">
    <original>H</original>
    <variation>P</variation>
    <location>
        <position position="533"/>
    </location>
</feature>
<feature type="sequence conflict" description="In Ref. 1; CAA32964." evidence="4" ref="1">
    <original>L</original>
    <variation>S</variation>
    <location>
        <position position="557"/>
    </location>
</feature>
<proteinExistence type="inferred from homology"/>
<keyword id="KW-0249">Electron transport</keyword>
<keyword id="KW-0472">Membrane</keyword>
<keyword id="KW-0496">Mitochondrion</keyword>
<keyword id="KW-0999">Mitochondrion inner membrane</keyword>
<keyword id="KW-0520">NAD</keyword>
<keyword id="KW-1185">Reference proteome</keyword>
<keyword id="KW-0679">Respiratory chain</keyword>
<keyword id="KW-1278">Translocase</keyword>
<keyword id="KW-0812">Transmembrane</keyword>
<keyword id="KW-1133">Transmembrane helix</keyword>
<keyword id="KW-0813">Transport</keyword>
<keyword id="KW-0830">Ubiquinone</keyword>